<feature type="chain" id="PRO_0000453779" description="Oxaleimides biosynthesis cluster protein N">
    <location>
        <begin position="1"/>
        <end position="176"/>
    </location>
</feature>
<feature type="transmembrane region" description="Helical" evidence="1">
    <location>
        <begin position="5"/>
        <end position="25"/>
    </location>
</feature>
<feature type="transmembrane region" description="Helical" evidence="1">
    <location>
        <begin position="71"/>
        <end position="91"/>
    </location>
</feature>
<feature type="transmembrane region" description="Helical" evidence="1">
    <location>
        <begin position="104"/>
        <end position="124"/>
    </location>
</feature>
<feature type="transmembrane region" description="Helical" evidence="1">
    <location>
        <begin position="155"/>
        <end position="175"/>
    </location>
</feature>
<keyword id="KW-0472">Membrane</keyword>
<keyword id="KW-0812">Transmembrane</keyword>
<keyword id="KW-1133">Transmembrane helix</keyword>
<comment type="function">
    <text evidence="2 5">Part of the gene cluster that mediates the biosynthesis of oxaleimides, cytotoxic compounds containing an unusual disubstituted succinimide moiety (PubMed:28365998). The first step of the pathway is provided by the HR-PKS poxF that serves in a new mode of collaborative biosynthesis with the PKS-NRPS poxE, by providing the olefin containing amino acid substrate via the synthesis of an ACP-bound dec-4-enoate (PubMed:28365998). The cytochrome P450 monooxygenase poxM-catalyzed oxidation at the alpha-position creates the enzyme-bound 2-hydroxydec-4-enoyl-ACP thioester, which may be prone to spontaneous hydrolysis to yield 2-hydroxydec-4-enoic acid due to increased electrophilicity of the carbonyl (PubMed:28365998). 2-hydroxydec-4-enoic acid can then be further oxidized by poxM to yield the alpha-ketoacid 2-oxodec-4-enoicacid, which is reductively aminated by the aminotransferase poxL to yield (S,E)-2-aminodec-4-enoic acid (PubMed:28365998). The Hybrid PKS-NRPS synthetase poxE then performs condensation between the octaketide product of its PKS modules and the amino group of (S,E)-2-aminodec-4-enoic acid which is activated and incorporated by the adenylation domain (PubMed:28365998). The resulting aminoacyl product can be cyclized by the Diels-Alderase PoxQ and reductively released by the reductive (R) domain of poxE to yield an aldehyde intermediate (Probable) (PubMed:28365998). The released aldehyde is then substrate for a Knoevenagel condensation by the hydrolyase poxO followed by an oxidation at the 5-position of the pyrrolidone ring (PubMed:28365998). The presence of the olefin from the amino acid building block allows for migration of the substituted allyl group to occur (PubMed:28365998). This allylic transposition reaction takes place in a conjugate addition, semipinacol-like fashion to yield a succinimide intermediate (PubMed:28365998). Iterative two-electron oxidations of the C7 methyl of the succinimide intermediate to the carboxylic acid can be catalyzed by one of two remaining cytochrome P450 monooxygenasess poxC or poxD to yield oxaleimide A (PubMed:28365998). Subsequent oxidation yields the maleimide scaffold oxaleimide I (PubMed:28365998). Both oxaleimide A and oxaleimide I can undergo oxidative modifications in the decalin ring to yield the series of products oxaleimides B to H (PubMed:28365998).</text>
</comment>
<comment type="pathway">
    <text evidence="4">Secondary metabolite biosynthesis.</text>
</comment>
<comment type="subcellular location">
    <subcellularLocation>
        <location evidence="1">Membrane</location>
        <topology evidence="1">Multi-pass membrane protein</topology>
    </subcellularLocation>
</comment>
<comment type="induction">
    <text evidence="2">Expression is positively regulated by the oxaleimides biosynthesis cluster-specific transcription factor poxB.</text>
</comment>
<evidence type="ECO:0000255" key="1"/>
<evidence type="ECO:0000269" key="2">
    <source>
    </source>
</evidence>
<evidence type="ECO:0000303" key="3">
    <source>
    </source>
</evidence>
<evidence type="ECO:0000305" key="4">
    <source>
    </source>
</evidence>
<evidence type="ECO:0000305" key="5">
    <source>
    </source>
</evidence>
<accession>A0A1W5T1Y3</accession>
<organism>
    <name type="scientific">Penicillium oxalicum</name>
    <dbReference type="NCBI Taxonomy" id="69781"/>
    <lineage>
        <taxon>Eukaryota</taxon>
        <taxon>Fungi</taxon>
        <taxon>Dikarya</taxon>
        <taxon>Ascomycota</taxon>
        <taxon>Pezizomycotina</taxon>
        <taxon>Eurotiomycetes</taxon>
        <taxon>Eurotiomycetidae</taxon>
        <taxon>Eurotiales</taxon>
        <taxon>Aspergillaceae</taxon>
        <taxon>Penicillium</taxon>
    </lineage>
</organism>
<proteinExistence type="evidence at transcript level"/>
<gene>
    <name evidence="3" type="primary">poxN</name>
</gene>
<name>POXN_PENOX</name>
<sequence length="176" mass="19634">MALDLLVVSAGSLALKVLRVTPLITTTILLVNRLAQYFALSTFLPPHTSPKKIDHVGAAFQHWLQTVVPRVWTGVISIVLFTRVALILNLFVRPDDLAGSNARFLYGVGLFLSFAHLSVAPKMLKFEKRMMSPETVPHVAMELLAGWMKVNNIRFWIVDVPFWVVGVWATLEGLKA</sequence>
<reference key="1">
    <citation type="journal article" date="2017" name="J. Am. Chem. Soc.">
        <title>Collaborative Biosynthesis of Maleimide- and Succinimide-Containing Natural Products by Fungal Polyketide Megasynthases.</title>
        <authorList>
            <person name="Sato M."/>
            <person name="Dander J.E."/>
            <person name="Sato C."/>
            <person name="Hung Y.S."/>
            <person name="Gao S.S."/>
            <person name="Tang M.C."/>
            <person name="Hang L."/>
            <person name="Winter J.M."/>
            <person name="Garg N.K."/>
            <person name="Watanabe K."/>
            <person name="Tang Y."/>
        </authorList>
    </citation>
    <scope>NUCLEOTIDE SEQUENCE [GENOMIC DNA]</scope>
    <scope>FUNCTION</scope>
    <scope>INDUCTION</scope>
    <scope>PATHWAY</scope>
    <source>
        <strain>K85</strain>
    </source>
</reference>
<reference key="2">
    <citation type="journal article" date="2020" name="Chem. Commun. (Camb.)">
        <title>Evidence for enzyme catalysed intramolecular [4+2] Diels-Alder cyclization during the biosynthesis of pyrichalasin H.</title>
        <authorList>
            <person name="Hantke V."/>
            <person name="Skellam E.J."/>
            <person name="Cox R.J."/>
        </authorList>
    </citation>
    <scope>FUNCTION</scope>
</reference>
<dbReference type="EMBL" id="KY764303">
    <property type="protein sequence ID" value="ARF05988.1"/>
    <property type="molecule type" value="Genomic_DNA"/>
</dbReference>
<dbReference type="GO" id="GO:0016020">
    <property type="term" value="C:membrane"/>
    <property type="evidence" value="ECO:0007669"/>
    <property type="project" value="UniProtKB-SubCell"/>
</dbReference>
<protein>
    <recommendedName>
        <fullName evidence="3">Oxaleimides biosynthesis cluster protein N</fullName>
    </recommendedName>
</protein>